<protein>
    <recommendedName>
        <fullName evidence="1">Nonsense-mediated mRNA decay factor SMG7-like</fullName>
    </recommendedName>
    <alternativeName>
        <fullName>Protein SMG7L</fullName>
    </alternativeName>
    <alternativeName>
        <fullName>Protetin SMG7-like</fullName>
    </alternativeName>
</protein>
<comment type="function">
    <text evidence="4">May play a role in growth and development.</text>
</comment>
<comment type="disruption phenotype">
    <text evidence="3">No visible phenotype under normal growth conditions.</text>
</comment>
<name>SMG7L_ARATH</name>
<sequence>MEANSADQKQKPNFLVEVNNIEKQLWTLIHSKTILHTDVSELYAKAGSTYEQIFKSNLQHEELQEVEFCLWKLHYKHIDEFRKGLKTNDHAKHMKAFKLFLSKAAEFYQNLISKVRGYYHRLSEESGEQKSRFLCHRFYICLGDLQRYQEQYLKAHEHPNWSTAATYYLEAAKSWPDSGNPHNQLAVLATYVSDELLALYHCVRSLAVKEPFPGASNNLLLLFEKNRSSPLQSLSTDAEFNYLNPSEKKVSVKERDLSKAKGELVAGIDLWPLVVRTTSFFFLKSSFDEFGRAFASTIRELDAAFAADDRNLEAMLESYQFMDTARKGPYKILQIVAVFIYIFHNLAEANGSDIVKEEVKLTNLALTMVFIVMGRVVERCLKTTPLDSCPLLPALLVFLDYLPFLLDKVEEEEEECRFDEKSKSAISYFFGKLVDILNQLKVKDKNCPAKTLLALWEDHELKSLAPLAPIHALLDFSSNMDLRESFDRGKELRLQRIISSAIDITTRQKKGSQKWLFFDNQRTHFYTTSGELQSNGELFHGNGEGRNRKCVTIGPVEIIPLENERSVPVEEEEVILLKPLVRCQSAPIYSSGIAAKPLSSDCTTSGNQTTTSNDSLRRTLSLIGSESFSFTQGLKDTDPQHLHLEEGTVSGRPPSLSAWVVDKNKEKGRLGLSKPNGLGPIDETGPVSAFDSLSINSSTEHPASSYSPPTPSAPLLPEDASWFHNDASTNKAESFYDQTRYMELPGIMKPYTNPPFVGISSSEWLRRYRESRNLGPAYSYQAQGTNNLRNFMAHGSSKFSLLARYGTPNDSSQNSTFHPQLYMEDHESRGEKLGNVQQSTTNPYGFSDDPGPFLRFLREKEWLNENGQRLRGPPPAYMNN</sequence>
<proteinExistence type="evidence at transcript level"/>
<dbReference type="EMBL" id="AC021044">
    <property type="protein sequence ID" value="AAF98429.1"/>
    <property type="molecule type" value="Genomic_DNA"/>
</dbReference>
<dbReference type="EMBL" id="CP002684">
    <property type="protein sequence ID" value="AEE30937.1"/>
    <property type="molecule type" value="Genomic_DNA"/>
</dbReference>
<dbReference type="EMBL" id="CP002684">
    <property type="protein sequence ID" value="AEE30938.1"/>
    <property type="molecule type" value="Genomic_DNA"/>
</dbReference>
<dbReference type="EMBL" id="BT004036">
    <property type="protein sequence ID" value="AAO42070.1"/>
    <property type="molecule type" value="mRNA"/>
</dbReference>
<dbReference type="PIR" id="G86408">
    <property type="entry name" value="G86408"/>
</dbReference>
<dbReference type="RefSeq" id="NP_174147.1">
    <property type="nucleotide sequence ID" value="NM_102591.5"/>
</dbReference>
<dbReference type="RefSeq" id="NP_973927.1">
    <property type="nucleotide sequence ID" value="NM_202198.2"/>
</dbReference>
<dbReference type="SMR" id="Q9FZ99"/>
<dbReference type="FunCoup" id="Q9FZ99">
    <property type="interactions" value="28"/>
</dbReference>
<dbReference type="STRING" id="3702.Q9FZ99"/>
<dbReference type="GlyGen" id="Q9FZ99">
    <property type="glycosylation" value="1 site"/>
</dbReference>
<dbReference type="iPTMnet" id="Q9FZ99"/>
<dbReference type="PaxDb" id="3702-AT1G28260.1"/>
<dbReference type="ProteomicsDB" id="228448"/>
<dbReference type="EnsemblPlants" id="AT1G28260.1">
    <property type="protein sequence ID" value="AT1G28260.1"/>
    <property type="gene ID" value="AT1G28260"/>
</dbReference>
<dbReference type="EnsemblPlants" id="AT1G28260.2">
    <property type="protein sequence ID" value="AT1G28260.2"/>
    <property type="gene ID" value="AT1G28260"/>
</dbReference>
<dbReference type="GeneID" id="839720"/>
<dbReference type="Gramene" id="AT1G28260.1">
    <property type="protein sequence ID" value="AT1G28260.1"/>
    <property type="gene ID" value="AT1G28260"/>
</dbReference>
<dbReference type="Gramene" id="AT1G28260.2">
    <property type="protein sequence ID" value="AT1G28260.2"/>
    <property type="gene ID" value="AT1G28260"/>
</dbReference>
<dbReference type="KEGG" id="ath:AT1G28260"/>
<dbReference type="Araport" id="AT1G28260"/>
<dbReference type="TAIR" id="AT1G28260"/>
<dbReference type="eggNOG" id="KOG2162">
    <property type="taxonomic scope" value="Eukaryota"/>
</dbReference>
<dbReference type="HOGENOM" id="CLU_303918_0_0_1"/>
<dbReference type="InParanoid" id="Q9FZ99"/>
<dbReference type="OMA" id="KCQFLCH"/>
<dbReference type="PhylomeDB" id="Q9FZ99"/>
<dbReference type="PRO" id="PR:Q9FZ99"/>
<dbReference type="Proteomes" id="UP000006548">
    <property type="component" value="Chromosome 1"/>
</dbReference>
<dbReference type="ExpressionAtlas" id="Q9FZ99">
    <property type="expression patterns" value="baseline and differential"/>
</dbReference>
<dbReference type="FunFam" id="1.25.40.10:FF:000225">
    <property type="entry name" value="Protein SMG7"/>
    <property type="match status" value="1"/>
</dbReference>
<dbReference type="Gene3D" id="1.25.40.10">
    <property type="entry name" value="Tetratricopeptide repeat domain"/>
    <property type="match status" value="1"/>
</dbReference>
<dbReference type="InterPro" id="IPR018834">
    <property type="entry name" value="DNA/RNA-bd_Est1-type"/>
</dbReference>
<dbReference type="InterPro" id="IPR019458">
    <property type="entry name" value="Est1-like_N"/>
</dbReference>
<dbReference type="InterPro" id="IPR045153">
    <property type="entry name" value="Est1/Ebs1-like"/>
</dbReference>
<dbReference type="InterPro" id="IPR011990">
    <property type="entry name" value="TPR-like_helical_dom_sf"/>
</dbReference>
<dbReference type="PANTHER" id="PTHR15696">
    <property type="entry name" value="SMG-7 SUPPRESSOR WITH MORPHOLOGICAL EFFECT ON GENITALIA PROTEIN 7"/>
    <property type="match status" value="1"/>
</dbReference>
<dbReference type="PANTHER" id="PTHR15696:SF0">
    <property type="entry name" value="TELOMERASE-BINDING PROTEIN EST1A"/>
    <property type="match status" value="1"/>
</dbReference>
<dbReference type="Pfam" id="PF10374">
    <property type="entry name" value="EST1"/>
    <property type="match status" value="1"/>
</dbReference>
<dbReference type="Pfam" id="PF10373">
    <property type="entry name" value="EST1_DNA_bind"/>
    <property type="match status" value="1"/>
</dbReference>
<dbReference type="SUPFAM" id="SSF48452">
    <property type="entry name" value="TPR-like"/>
    <property type="match status" value="1"/>
</dbReference>
<gene>
    <name evidence="5" type="primary">SMG7L</name>
    <name type="ordered locus">At1g28260</name>
    <name type="ORF">F3H9.9</name>
</gene>
<organism>
    <name type="scientific">Arabidopsis thaliana</name>
    <name type="common">Mouse-ear cress</name>
    <dbReference type="NCBI Taxonomy" id="3702"/>
    <lineage>
        <taxon>Eukaryota</taxon>
        <taxon>Viridiplantae</taxon>
        <taxon>Streptophyta</taxon>
        <taxon>Embryophyta</taxon>
        <taxon>Tracheophyta</taxon>
        <taxon>Spermatophyta</taxon>
        <taxon>Magnoliopsida</taxon>
        <taxon>eudicotyledons</taxon>
        <taxon>Gunneridae</taxon>
        <taxon>Pentapetalae</taxon>
        <taxon>rosids</taxon>
        <taxon>malvids</taxon>
        <taxon>Brassicales</taxon>
        <taxon>Brassicaceae</taxon>
        <taxon>Camelineae</taxon>
        <taxon>Arabidopsis</taxon>
    </lineage>
</organism>
<accession>Q9FZ99</accession>
<accession>Q84WB4</accession>
<feature type="chain" id="PRO_0000422381" description="Nonsense-mediated mRNA decay factor SMG7-like">
    <location>
        <begin position="1"/>
        <end position="880"/>
    </location>
</feature>
<feature type="repeat" description="TPR 1">
    <location>
        <begin position="149"/>
        <end position="183"/>
    </location>
</feature>
<feature type="repeat" description="TPR 2">
    <location>
        <begin position="184"/>
        <end position="217"/>
    </location>
</feature>
<feature type="region of interest" description="Disordered" evidence="2">
    <location>
        <begin position="669"/>
        <end position="711"/>
    </location>
</feature>
<feature type="compositionally biased region" description="Polar residues" evidence="2">
    <location>
        <begin position="691"/>
        <end position="701"/>
    </location>
</feature>
<feature type="sequence conflict" description="In Ref. 3; AAO42070." evidence="4" ref="3">
    <original>K</original>
    <variation>E</variation>
    <location>
        <position position="248"/>
    </location>
</feature>
<evidence type="ECO:0000250" key="1">
    <source>
        <dbReference type="UniProtKB" id="Q92540"/>
    </source>
</evidence>
<evidence type="ECO:0000256" key="2">
    <source>
        <dbReference type="SAM" id="MobiDB-lite"/>
    </source>
</evidence>
<evidence type="ECO:0000269" key="3">
    <source>
    </source>
</evidence>
<evidence type="ECO:0000305" key="4"/>
<evidence type="ECO:0000312" key="5">
    <source>
        <dbReference type="Araport" id="AT1G28260"/>
    </source>
</evidence>
<reference key="1">
    <citation type="journal article" date="2000" name="Nature">
        <title>Sequence and analysis of chromosome 1 of the plant Arabidopsis thaliana.</title>
        <authorList>
            <person name="Theologis A."/>
            <person name="Ecker J.R."/>
            <person name="Palm C.J."/>
            <person name="Federspiel N.A."/>
            <person name="Kaul S."/>
            <person name="White O."/>
            <person name="Alonso J."/>
            <person name="Altafi H."/>
            <person name="Araujo R."/>
            <person name="Bowman C.L."/>
            <person name="Brooks S.Y."/>
            <person name="Buehler E."/>
            <person name="Chan A."/>
            <person name="Chao Q."/>
            <person name="Chen H."/>
            <person name="Cheuk R.F."/>
            <person name="Chin C.W."/>
            <person name="Chung M.K."/>
            <person name="Conn L."/>
            <person name="Conway A.B."/>
            <person name="Conway A.R."/>
            <person name="Creasy T.H."/>
            <person name="Dewar K."/>
            <person name="Dunn P."/>
            <person name="Etgu P."/>
            <person name="Feldblyum T.V."/>
            <person name="Feng J.-D."/>
            <person name="Fong B."/>
            <person name="Fujii C.Y."/>
            <person name="Gill J.E."/>
            <person name="Goldsmith A.D."/>
            <person name="Haas B."/>
            <person name="Hansen N.F."/>
            <person name="Hughes B."/>
            <person name="Huizar L."/>
            <person name="Hunter J.L."/>
            <person name="Jenkins J."/>
            <person name="Johnson-Hopson C."/>
            <person name="Khan S."/>
            <person name="Khaykin E."/>
            <person name="Kim C.J."/>
            <person name="Koo H.L."/>
            <person name="Kremenetskaia I."/>
            <person name="Kurtz D.B."/>
            <person name="Kwan A."/>
            <person name="Lam B."/>
            <person name="Langin-Hooper S."/>
            <person name="Lee A."/>
            <person name="Lee J.M."/>
            <person name="Lenz C.A."/>
            <person name="Li J.H."/>
            <person name="Li Y.-P."/>
            <person name="Lin X."/>
            <person name="Liu S.X."/>
            <person name="Liu Z.A."/>
            <person name="Luros J.S."/>
            <person name="Maiti R."/>
            <person name="Marziali A."/>
            <person name="Militscher J."/>
            <person name="Miranda M."/>
            <person name="Nguyen M."/>
            <person name="Nierman W.C."/>
            <person name="Osborne B.I."/>
            <person name="Pai G."/>
            <person name="Peterson J."/>
            <person name="Pham P.K."/>
            <person name="Rizzo M."/>
            <person name="Rooney T."/>
            <person name="Rowley D."/>
            <person name="Sakano H."/>
            <person name="Salzberg S.L."/>
            <person name="Schwartz J.R."/>
            <person name="Shinn P."/>
            <person name="Southwick A.M."/>
            <person name="Sun H."/>
            <person name="Tallon L.J."/>
            <person name="Tambunga G."/>
            <person name="Toriumi M.J."/>
            <person name="Town C.D."/>
            <person name="Utterback T."/>
            <person name="Van Aken S."/>
            <person name="Vaysberg M."/>
            <person name="Vysotskaia V.S."/>
            <person name="Walker M."/>
            <person name="Wu D."/>
            <person name="Yu G."/>
            <person name="Fraser C.M."/>
            <person name="Venter J.C."/>
            <person name="Davis R.W."/>
        </authorList>
    </citation>
    <scope>NUCLEOTIDE SEQUENCE [LARGE SCALE GENOMIC DNA]</scope>
    <source>
        <strain>cv. Columbia</strain>
    </source>
</reference>
<reference key="2">
    <citation type="journal article" date="2017" name="Plant J.">
        <title>Araport11: a complete reannotation of the Arabidopsis thaliana reference genome.</title>
        <authorList>
            <person name="Cheng C.Y."/>
            <person name="Krishnakumar V."/>
            <person name="Chan A.P."/>
            <person name="Thibaud-Nissen F."/>
            <person name="Schobel S."/>
            <person name="Town C.D."/>
        </authorList>
    </citation>
    <scope>GENOME REANNOTATION</scope>
    <source>
        <strain>cv. Columbia</strain>
    </source>
</reference>
<reference key="3">
    <citation type="journal article" date="2003" name="Science">
        <title>Empirical analysis of transcriptional activity in the Arabidopsis genome.</title>
        <authorList>
            <person name="Yamada K."/>
            <person name="Lim J."/>
            <person name="Dale J.M."/>
            <person name="Chen H."/>
            <person name="Shinn P."/>
            <person name="Palm C.J."/>
            <person name="Southwick A.M."/>
            <person name="Wu H.C."/>
            <person name="Kim C.J."/>
            <person name="Nguyen M."/>
            <person name="Pham P.K."/>
            <person name="Cheuk R.F."/>
            <person name="Karlin-Newmann G."/>
            <person name="Liu S.X."/>
            <person name="Lam B."/>
            <person name="Sakano H."/>
            <person name="Wu T."/>
            <person name="Yu G."/>
            <person name="Miranda M."/>
            <person name="Quach H.L."/>
            <person name="Tripp M."/>
            <person name="Chang C.H."/>
            <person name="Lee J.M."/>
            <person name="Toriumi M.J."/>
            <person name="Chan M.M."/>
            <person name="Tang C.C."/>
            <person name="Onodera C.S."/>
            <person name="Deng J.M."/>
            <person name="Akiyama K."/>
            <person name="Ansari Y."/>
            <person name="Arakawa T."/>
            <person name="Banh J."/>
            <person name="Banno F."/>
            <person name="Bowser L."/>
            <person name="Brooks S.Y."/>
            <person name="Carninci P."/>
            <person name="Chao Q."/>
            <person name="Choy N."/>
            <person name="Enju A."/>
            <person name="Goldsmith A.D."/>
            <person name="Gurjal M."/>
            <person name="Hansen N.F."/>
            <person name="Hayashizaki Y."/>
            <person name="Johnson-Hopson C."/>
            <person name="Hsuan V.W."/>
            <person name="Iida K."/>
            <person name="Karnes M."/>
            <person name="Khan S."/>
            <person name="Koesema E."/>
            <person name="Ishida J."/>
            <person name="Jiang P.X."/>
            <person name="Jones T."/>
            <person name="Kawai J."/>
            <person name="Kamiya A."/>
            <person name="Meyers C."/>
            <person name="Nakajima M."/>
            <person name="Narusaka M."/>
            <person name="Seki M."/>
            <person name="Sakurai T."/>
            <person name="Satou M."/>
            <person name="Tamse R."/>
            <person name="Vaysberg M."/>
            <person name="Wallender E.K."/>
            <person name="Wong C."/>
            <person name="Yamamura Y."/>
            <person name="Yuan S."/>
            <person name="Shinozaki K."/>
            <person name="Davis R.W."/>
            <person name="Theologis A."/>
            <person name="Ecker J.R."/>
        </authorList>
    </citation>
    <scope>NUCLEOTIDE SEQUENCE [LARGE SCALE MRNA]</scope>
    <source>
        <strain>cv. Columbia</strain>
    </source>
</reference>
<reference key="4">
    <citation type="journal article" date="2008" name="J. Cell Sci.">
        <title>Arabidopsis SMG7 protein is required for exit from meiosis.</title>
        <authorList>
            <person name="Riehs N."/>
            <person name="Akimcheva S."/>
            <person name="Puizina J."/>
            <person name="Bulankova P."/>
            <person name="Idol R.A."/>
            <person name="Siroky J."/>
            <person name="Schleiffer A."/>
            <person name="Schweizer D."/>
            <person name="Shippen D.E."/>
            <person name="Riha K."/>
        </authorList>
    </citation>
    <scope>DISRUPTION PHENOTYPE</scope>
</reference>
<keyword id="KW-1185">Reference proteome</keyword>
<keyword id="KW-0677">Repeat</keyword>
<keyword id="KW-0802">TPR repeat</keyword>